<evidence type="ECO:0000269" key="1">
    <source>
    </source>
</evidence>
<evidence type="ECO:0000305" key="2"/>
<evidence type="ECO:0000305" key="3">
    <source>
    </source>
</evidence>
<proteinExistence type="evidence at protein level"/>
<comment type="subcellular location">
    <subcellularLocation>
        <location evidence="1">Secreted</location>
    </subcellularLocation>
</comment>
<comment type="tissue specificity">
    <text evidence="3">Expressed by the venom duct.</text>
</comment>
<comment type="domain">
    <text evidence="2">The cysteine framework is V (CC-CC).</text>
</comment>
<comment type="PTM">
    <text evidence="2">Contains 2 disulfide bonds that can be either 'C1-C3, C2-C4' or 'C1-C4, C2-C3', since these disulfide connectivities have been observed for conotoxins with cysteine framework V (for examples, see AC P0DQQ7 and AC P81755).</text>
</comment>
<comment type="similarity">
    <text evidence="2">Belongs to the conotoxin T superfamily.</text>
</comment>
<keyword id="KW-0027">Amidation</keyword>
<keyword id="KW-0903">Direct protein sequencing</keyword>
<keyword id="KW-1015">Disulfide bond</keyword>
<keyword id="KW-0301">Gamma-carboxyglutamic acid</keyword>
<keyword id="KW-0964">Secreted</keyword>
<keyword id="KW-0800">Toxin</keyword>
<feature type="peptide" id="PRO_0000445052" description="Conotoxin tx5h" evidence="1">
    <location>
        <begin position="1"/>
        <end position="12"/>
    </location>
</feature>
<feature type="modified residue" description="4-carboxyglutamate" evidence="1">
    <location>
        <position position="7"/>
    </location>
</feature>
<sequence length="12" mass="1302">NCCPIDEESCCS</sequence>
<organism>
    <name type="scientific">Conus textile</name>
    <name type="common">Cloth-of-gold cone</name>
    <dbReference type="NCBI Taxonomy" id="6494"/>
    <lineage>
        <taxon>Eukaryota</taxon>
        <taxon>Metazoa</taxon>
        <taxon>Spiralia</taxon>
        <taxon>Lophotrochozoa</taxon>
        <taxon>Mollusca</taxon>
        <taxon>Gastropoda</taxon>
        <taxon>Caenogastropoda</taxon>
        <taxon>Neogastropoda</taxon>
        <taxon>Conoidea</taxon>
        <taxon>Conidae</taxon>
        <taxon>Conus</taxon>
        <taxon>Cylinder</taxon>
    </lineage>
</organism>
<dbReference type="GO" id="GO:0005576">
    <property type="term" value="C:extracellular region"/>
    <property type="evidence" value="ECO:0007669"/>
    <property type="project" value="UniProtKB-SubCell"/>
</dbReference>
<dbReference type="GO" id="GO:0090729">
    <property type="term" value="F:toxin activity"/>
    <property type="evidence" value="ECO:0007669"/>
    <property type="project" value="UniProtKB-KW"/>
</dbReference>
<protein>
    <recommendedName>
        <fullName evidence="2">Conotoxin tx5h</fullName>
    </recommendedName>
    <alternativeName>
        <fullName evidence="2">Conotoxin Tx5.4</fullName>
    </alternativeName>
</protein>
<accession>P0DPL6</accession>
<name>CT5H_CONTE</name>
<reference key="1">
    <citation type="journal article" date="2012" name="J. Proteome Res.">
        <title>Constrained de novo sequencing of conotoxins.</title>
        <authorList>
            <person name="Bhatia S."/>
            <person name="Kil Y.J."/>
            <person name="Ueberheide B."/>
            <person name="Chait B.T."/>
            <person name="Tayo L."/>
            <person name="Cruz L."/>
            <person name="Lu B."/>
            <person name="Yates J.R. III"/>
            <person name="Bern M."/>
        </authorList>
    </citation>
    <scope>PROTEIN SEQUENCE</scope>
    <scope>IDENTIFICATION BY MASS SPECTROMETRY</scope>
    <scope>SUBCELLULAR LOCATION</scope>
    <scope>GAMMA-CARBOXYGLUTAMATION AT GLU-7</scope>
    <source>
        <tissue>Venom</tissue>
    </source>
</reference>